<dbReference type="EMBL" id="M81884">
    <property type="protein sequence ID" value="AAA65864.1"/>
    <property type="molecule type" value="Genomic_DNA"/>
</dbReference>
<dbReference type="PIR" id="S78395">
    <property type="entry name" value="S78395"/>
</dbReference>
<dbReference type="RefSeq" id="NP_054390.1">
    <property type="nucleotide sequence ID" value="NC_001568.1"/>
</dbReference>
<dbReference type="SMR" id="P30055"/>
<dbReference type="GeneID" id="801408"/>
<dbReference type="GO" id="GO:0022627">
    <property type="term" value="C:cytosolic small ribosomal subunit"/>
    <property type="evidence" value="ECO:0007669"/>
    <property type="project" value="TreeGrafter"/>
</dbReference>
<dbReference type="GO" id="GO:0009536">
    <property type="term" value="C:plastid"/>
    <property type="evidence" value="ECO:0007669"/>
    <property type="project" value="UniProtKB-SubCell"/>
</dbReference>
<dbReference type="GO" id="GO:0003723">
    <property type="term" value="F:RNA binding"/>
    <property type="evidence" value="ECO:0007669"/>
    <property type="project" value="UniProtKB-KW"/>
</dbReference>
<dbReference type="GO" id="GO:0003735">
    <property type="term" value="F:structural constituent of ribosome"/>
    <property type="evidence" value="ECO:0007669"/>
    <property type="project" value="InterPro"/>
</dbReference>
<dbReference type="GO" id="GO:0006412">
    <property type="term" value="P:translation"/>
    <property type="evidence" value="ECO:0007669"/>
    <property type="project" value="InterPro"/>
</dbReference>
<dbReference type="CDD" id="cd02412">
    <property type="entry name" value="KH-II_30S_S3"/>
    <property type="match status" value="1"/>
</dbReference>
<dbReference type="FunFam" id="3.30.1140.32:FF:000003">
    <property type="entry name" value="30S ribosomal protein S3, chloroplastic"/>
    <property type="match status" value="1"/>
</dbReference>
<dbReference type="Gene3D" id="3.30.300.20">
    <property type="match status" value="1"/>
</dbReference>
<dbReference type="Gene3D" id="3.30.1140.32">
    <property type="entry name" value="Ribosomal protein S3, C-terminal domain"/>
    <property type="match status" value="1"/>
</dbReference>
<dbReference type="HAMAP" id="MF_01309_B">
    <property type="entry name" value="Ribosomal_uS3_B"/>
    <property type="match status" value="1"/>
</dbReference>
<dbReference type="InterPro" id="IPR015946">
    <property type="entry name" value="KH_dom-like_a/b"/>
</dbReference>
<dbReference type="InterPro" id="IPR009019">
    <property type="entry name" value="KH_sf_prok-type"/>
</dbReference>
<dbReference type="InterPro" id="IPR036419">
    <property type="entry name" value="Ribosomal_S3_C_sf"/>
</dbReference>
<dbReference type="InterPro" id="IPR005704">
    <property type="entry name" value="Ribosomal_uS3_bac-typ"/>
</dbReference>
<dbReference type="InterPro" id="IPR001351">
    <property type="entry name" value="Ribosomal_uS3_C"/>
</dbReference>
<dbReference type="InterPro" id="IPR018280">
    <property type="entry name" value="Ribosomal_uS3_CS"/>
</dbReference>
<dbReference type="NCBIfam" id="TIGR01009">
    <property type="entry name" value="rpsC_bact"/>
    <property type="match status" value="1"/>
</dbReference>
<dbReference type="PANTHER" id="PTHR11760">
    <property type="entry name" value="30S/40S RIBOSOMAL PROTEIN S3"/>
    <property type="match status" value="1"/>
</dbReference>
<dbReference type="PANTHER" id="PTHR11760:SF19">
    <property type="entry name" value="SMALL RIBOSOMAL SUBUNIT PROTEIN US3C"/>
    <property type="match status" value="1"/>
</dbReference>
<dbReference type="Pfam" id="PF00189">
    <property type="entry name" value="Ribosomal_S3_C"/>
    <property type="match status" value="1"/>
</dbReference>
<dbReference type="SUPFAM" id="SSF54814">
    <property type="entry name" value="Prokaryotic type KH domain (KH-domain type II)"/>
    <property type="match status" value="1"/>
</dbReference>
<dbReference type="SUPFAM" id="SSF54821">
    <property type="entry name" value="Ribosomal protein S3 C-terminal domain"/>
    <property type="match status" value="1"/>
</dbReference>
<dbReference type="PROSITE" id="PS00548">
    <property type="entry name" value="RIBOSOMAL_S3"/>
    <property type="match status" value="1"/>
</dbReference>
<proteinExistence type="inferred from homology"/>
<geneLocation type="non-photosynthetic plastid"/>
<feature type="chain" id="PRO_0000130280" description="Small ribosomal subunit protein uS3c">
    <location>
        <begin position="1"/>
        <end position="220"/>
    </location>
</feature>
<feature type="domain" description="KH type-2">
    <location>
        <begin position="39"/>
        <end position="120"/>
    </location>
</feature>
<keyword id="KW-0934">Plastid</keyword>
<keyword id="KW-0687">Ribonucleoprotein</keyword>
<keyword id="KW-0689">Ribosomal protein</keyword>
<keyword id="KW-0694">RNA-binding</keyword>
<gene>
    <name type="primary">rps3</name>
</gene>
<protein>
    <recommendedName>
        <fullName evidence="2">Small ribosomal subunit protein uS3c</fullName>
    </recommendedName>
    <alternativeName>
        <fullName>Plastid 30S ribosomal protein S3</fullName>
    </alternativeName>
</protein>
<name>RR3_EPIVI</name>
<reference key="1">
    <citation type="journal article" date="1992" name="Proc. Natl. Acad. Sci. U.S.A.">
        <title>Function and evolution of a minimal plastid genome from a nonphotosynthetic parasitic plant.</title>
        <authorList>
            <person name="Wolfe K.H."/>
            <person name="Morden C.W."/>
            <person name="Palmer J.D."/>
        </authorList>
    </citation>
    <scope>NUCLEOTIDE SEQUENCE [LARGE SCALE GENOMIC DNA]</scope>
</reference>
<reference key="2">
    <citation type="journal article" date="1992" name="J. Mol. Evol.">
        <title>Rapid evolution of the plastid translational apparatus in a nonphotosynthetic plant: loss or accelerated sequence evolution of tRNA and ribosomal protein genes.</title>
        <authorList>
            <person name="Wolfe K.H."/>
            <person name="Morden C.W."/>
            <person name="Ems S.C."/>
            <person name="Palmer J.D."/>
        </authorList>
    </citation>
    <scope>NUCLEOTIDE SEQUENCE [GENOMIC DNA]</scope>
</reference>
<organism>
    <name type="scientific">Epifagus virginiana</name>
    <name type="common">Beechdrops</name>
    <name type="synonym">Orobanche virginiana</name>
    <dbReference type="NCBI Taxonomy" id="4177"/>
    <lineage>
        <taxon>Eukaryota</taxon>
        <taxon>Viridiplantae</taxon>
        <taxon>Streptophyta</taxon>
        <taxon>Embryophyta</taxon>
        <taxon>Tracheophyta</taxon>
        <taxon>Spermatophyta</taxon>
        <taxon>Magnoliopsida</taxon>
        <taxon>eudicotyledons</taxon>
        <taxon>Gunneridae</taxon>
        <taxon>Pentapetalae</taxon>
        <taxon>asterids</taxon>
        <taxon>lamiids</taxon>
        <taxon>Lamiales</taxon>
        <taxon>Orobanchaceae</taxon>
        <taxon>Orobancheae</taxon>
        <taxon>Epifagus</taxon>
    </lineage>
</organism>
<sequence>MGQKINPLGFRLGTTQSHHSFWFAQPKNYYKGIQEDQKIRDFIKNYVKNNIIISPDTEGIAYIEIQKRIDFLKIMIFIGFKKFLIENRQLGIIKEALHIDLKKNFHYVNRKLIIDIIRITKPYRNPNILAEFIADQLKNRVSFRKTMKKAIELTESEDTKGIQVQISGRIDGKEIARVEWIREGRVPLQTIQAKINYCSYMVRTTHGVLGIKIWIFIEKE</sequence>
<comment type="subunit">
    <text evidence="1">Part of the 30S ribosomal subunit.</text>
</comment>
<comment type="subcellular location">
    <subcellularLocation>
        <location>Plastid</location>
    </subcellularLocation>
</comment>
<comment type="similarity">
    <text evidence="2">Belongs to the universal ribosomal protein uS3 family.</text>
</comment>
<accession>P30055</accession>
<evidence type="ECO:0000250" key="1"/>
<evidence type="ECO:0000305" key="2"/>